<organism>
    <name type="scientific">Vibrio atlanticus (strain LGP32)</name>
    <name type="common">Vibrio splendidus (strain Mel32)</name>
    <dbReference type="NCBI Taxonomy" id="575788"/>
    <lineage>
        <taxon>Bacteria</taxon>
        <taxon>Pseudomonadati</taxon>
        <taxon>Pseudomonadota</taxon>
        <taxon>Gammaproteobacteria</taxon>
        <taxon>Vibrionales</taxon>
        <taxon>Vibrionaceae</taxon>
        <taxon>Vibrio</taxon>
    </lineage>
</organism>
<accession>B7VL36</accession>
<comment type="function">
    <text evidence="1">Heme chaperone required for the biogenesis of c-type cytochromes. Transiently binds heme delivered by CcmC and transfers the heme to apo-cytochromes in a process facilitated by CcmF and CcmH.</text>
</comment>
<comment type="subcellular location">
    <subcellularLocation>
        <location evidence="1">Cell inner membrane</location>
        <topology evidence="1">Single-pass type II membrane protein</topology>
        <orientation evidence="1">Periplasmic side</orientation>
    </subcellularLocation>
</comment>
<comment type="similarity">
    <text evidence="1">Belongs to the CcmE/CycJ family.</text>
</comment>
<proteinExistence type="inferred from homology"/>
<keyword id="KW-0997">Cell inner membrane</keyword>
<keyword id="KW-1003">Cell membrane</keyword>
<keyword id="KW-0201">Cytochrome c-type biogenesis</keyword>
<keyword id="KW-0349">Heme</keyword>
<keyword id="KW-0408">Iron</keyword>
<keyword id="KW-0472">Membrane</keyword>
<keyword id="KW-0479">Metal-binding</keyword>
<keyword id="KW-0735">Signal-anchor</keyword>
<keyword id="KW-0812">Transmembrane</keyword>
<keyword id="KW-1133">Transmembrane helix</keyword>
<feature type="chain" id="PRO_1000189058" description="Cytochrome c-type biogenesis protein CcmE">
    <location>
        <begin position="1"/>
        <end position="160"/>
    </location>
</feature>
<feature type="topological domain" description="Cytoplasmic" evidence="1">
    <location>
        <begin position="1"/>
        <end position="8"/>
    </location>
</feature>
<feature type="transmembrane region" description="Helical; Signal-anchor for type II membrane protein" evidence="1">
    <location>
        <begin position="9"/>
        <end position="29"/>
    </location>
</feature>
<feature type="topological domain" description="Periplasmic" evidence="1">
    <location>
        <begin position="30"/>
        <end position="160"/>
    </location>
</feature>
<feature type="binding site" description="covalent" evidence="1">
    <location>
        <position position="128"/>
    </location>
    <ligand>
        <name>heme</name>
        <dbReference type="ChEBI" id="CHEBI:30413"/>
    </ligand>
</feature>
<feature type="binding site" description="axial binding residue" evidence="1">
    <location>
        <position position="132"/>
    </location>
    <ligand>
        <name>heme</name>
        <dbReference type="ChEBI" id="CHEBI:30413"/>
    </ligand>
    <ligandPart>
        <name>Fe</name>
        <dbReference type="ChEBI" id="CHEBI:18248"/>
    </ligandPart>
</feature>
<dbReference type="EMBL" id="FM954972">
    <property type="protein sequence ID" value="CAV17857.1"/>
    <property type="molecule type" value="Genomic_DNA"/>
</dbReference>
<dbReference type="SMR" id="B7VL36"/>
<dbReference type="STRING" id="575788.VS_0854"/>
<dbReference type="KEGG" id="vsp:VS_0854"/>
<dbReference type="eggNOG" id="COG2332">
    <property type="taxonomic scope" value="Bacteria"/>
</dbReference>
<dbReference type="HOGENOM" id="CLU_079503_1_0_6"/>
<dbReference type="Proteomes" id="UP000009100">
    <property type="component" value="Chromosome 1"/>
</dbReference>
<dbReference type="GO" id="GO:0005886">
    <property type="term" value="C:plasma membrane"/>
    <property type="evidence" value="ECO:0007669"/>
    <property type="project" value="UniProtKB-SubCell"/>
</dbReference>
<dbReference type="GO" id="GO:0020037">
    <property type="term" value="F:heme binding"/>
    <property type="evidence" value="ECO:0007669"/>
    <property type="project" value="InterPro"/>
</dbReference>
<dbReference type="GO" id="GO:0046872">
    <property type="term" value="F:metal ion binding"/>
    <property type="evidence" value="ECO:0007669"/>
    <property type="project" value="UniProtKB-KW"/>
</dbReference>
<dbReference type="GO" id="GO:0017004">
    <property type="term" value="P:cytochrome complex assembly"/>
    <property type="evidence" value="ECO:0007669"/>
    <property type="project" value="UniProtKB-KW"/>
</dbReference>
<dbReference type="FunFam" id="2.40.50.140:FF:000104">
    <property type="entry name" value="Cytochrome c-type biogenesis protein CcmE"/>
    <property type="match status" value="1"/>
</dbReference>
<dbReference type="Gene3D" id="2.40.50.140">
    <property type="entry name" value="Nucleic acid-binding proteins"/>
    <property type="match status" value="1"/>
</dbReference>
<dbReference type="HAMAP" id="MF_01959">
    <property type="entry name" value="CcmE"/>
    <property type="match status" value="1"/>
</dbReference>
<dbReference type="InterPro" id="IPR004329">
    <property type="entry name" value="CcmE"/>
</dbReference>
<dbReference type="InterPro" id="IPR036127">
    <property type="entry name" value="CcmE-like_sf"/>
</dbReference>
<dbReference type="InterPro" id="IPR012340">
    <property type="entry name" value="NA-bd_OB-fold"/>
</dbReference>
<dbReference type="NCBIfam" id="NF009638">
    <property type="entry name" value="PRK13165.1"/>
    <property type="match status" value="1"/>
</dbReference>
<dbReference type="NCBIfam" id="NF009727">
    <property type="entry name" value="PRK13254.1-1"/>
    <property type="match status" value="1"/>
</dbReference>
<dbReference type="NCBIfam" id="NF009729">
    <property type="entry name" value="PRK13254.1-3"/>
    <property type="match status" value="1"/>
</dbReference>
<dbReference type="NCBIfam" id="NF009731">
    <property type="entry name" value="PRK13254.1-5"/>
    <property type="match status" value="1"/>
</dbReference>
<dbReference type="PANTHER" id="PTHR34128">
    <property type="entry name" value="CYTOCHROME C-TYPE BIOGENESIS PROTEIN CCME HOMOLOG, MITOCHONDRIAL"/>
    <property type="match status" value="1"/>
</dbReference>
<dbReference type="PANTHER" id="PTHR34128:SF2">
    <property type="entry name" value="CYTOCHROME C-TYPE BIOGENESIS PROTEIN CCME HOMOLOG, MITOCHONDRIAL"/>
    <property type="match status" value="1"/>
</dbReference>
<dbReference type="Pfam" id="PF03100">
    <property type="entry name" value="CcmE"/>
    <property type="match status" value="1"/>
</dbReference>
<dbReference type="SUPFAM" id="SSF82093">
    <property type="entry name" value="Heme chaperone CcmE"/>
    <property type="match status" value="1"/>
</dbReference>
<gene>
    <name evidence="1" type="primary">ccmE</name>
    <name evidence="1" type="synonym">cycJ</name>
    <name type="ordered locus">VS_0854</name>
</gene>
<name>CCME_VIBA3</name>
<protein>
    <recommendedName>
        <fullName evidence="1">Cytochrome c-type biogenesis protein CcmE</fullName>
    </recommendedName>
    <alternativeName>
        <fullName evidence="1">Cytochrome c maturation protein E</fullName>
    </alternativeName>
    <alternativeName>
        <fullName evidence="1">Heme chaperone CcmE</fullName>
    </alternativeName>
</protein>
<evidence type="ECO:0000255" key="1">
    <source>
        <dbReference type="HAMAP-Rule" id="MF_01959"/>
    </source>
</evidence>
<sequence>MNPRRKKRLGIILAIFFGISATVGLMVYALNQNMDLFYTPTELVNGKDGKKPEVGQRLRIGGMVVVGSVSRDNESLRVSFDLADVGPKVTILYDGILPDLFREGQGIVAQGVLKDATTIEAFEVLAKHDEEYMPSEVAEAMKKTHEPLQYTTEQKEGNAQ</sequence>
<reference key="1">
    <citation type="submission" date="2009-02" db="EMBL/GenBank/DDBJ databases">
        <title>Vibrio splendidus str. LGP32 complete genome.</title>
        <authorList>
            <person name="Mazel D."/>
            <person name="Le Roux F."/>
        </authorList>
    </citation>
    <scope>NUCLEOTIDE SEQUENCE [LARGE SCALE GENOMIC DNA]</scope>
    <source>
        <strain>LGP32</strain>
    </source>
</reference>